<reference key="1">
    <citation type="submission" date="1990-07" db="EMBL/GenBank/DDBJ databases">
        <title>Sequence and organisation of histone gene clusters in sea stars.</title>
        <authorList>
            <person name="Wu Y."/>
            <person name="Kowbel D."/>
            <person name="Smith M.J."/>
        </authorList>
    </citation>
    <scope>NUCLEOTIDE SEQUENCE [GENOMIC DNA]</scope>
</reference>
<feature type="initiator methionine" description="Removed" evidence="1">
    <location>
        <position position="1"/>
    </location>
</feature>
<feature type="chain" id="PRO_0000158350" description="Histone H4">
    <location>
        <begin position="2"/>
        <end position="103"/>
    </location>
</feature>
<feature type="DNA-binding region">
    <location>
        <begin position="17"/>
        <end position="21"/>
    </location>
</feature>
<feature type="region of interest" description="Disordered" evidence="3">
    <location>
        <begin position="1"/>
        <end position="20"/>
    </location>
</feature>
<feature type="compositionally biased region" description="Gly residues" evidence="3">
    <location>
        <begin position="1"/>
        <end position="14"/>
    </location>
</feature>
<feature type="modified residue" description="N-acetylserine" evidence="1">
    <location>
        <position position="2"/>
    </location>
</feature>
<feature type="modified residue" description="N6-acetyl-N6-methyllysine; alternate" evidence="2">
    <location>
        <position position="6"/>
    </location>
</feature>
<feature type="modified residue" description="N6-acetyl-N6-methyllysine; alternate" evidence="2">
    <location>
        <position position="13"/>
    </location>
</feature>
<feature type="modified residue" description="N6-acetyllysine" evidence="1">
    <location>
        <position position="17"/>
    </location>
</feature>
<feature type="modified residue" description="N6-methyllysine" evidence="1">
    <location>
        <position position="21"/>
    </location>
</feature>
<organism>
    <name type="scientific">Pisaster ochraceus</name>
    <name type="common">Ochre sea star</name>
    <name type="synonym">Asterias ochracea</name>
    <dbReference type="NCBI Taxonomy" id="7612"/>
    <lineage>
        <taxon>Eukaryota</taxon>
        <taxon>Metazoa</taxon>
        <taxon>Echinodermata</taxon>
        <taxon>Eleutherozoa</taxon>
        <taxon>Asterozoa</taxon>
        <taxon>Asteroidea</taxon>
        <taxon>Forcipulatacea</taxon>
        <taxon>Forcipulatida</taxon>
        <taxon>Asteriidae</taxon>
        <taxon>Pisaster</taxon>
    </lineage>
</organism>
<evidence type="ECO:0000250" key="1"/>
<evidence type="ECO:0000250" key="2">
    <source>
        <dbReference type="UniProtKB" id="P62805"/>
    </source>
</evidence>
<evidence type="ECO:0000256" key="3">
    <source>
        <dbReference type="SAM" id="MobiDB-lite"/>
    </source>
</evidence>
<evidence type="ECO:0000305" key="4"/>
<protein>
    <recommendedName>
        <fullName>Histone H4</fullName>
    </recommendedName>
</protein>
<dbReference type="EMBL" id="X54113">
    <property type="protein sequence ID" value="CAA38051.1"/>
    <property type="molecule type" value="Genomic_DNA"/>
</dbReference>
<dbReference type="PIR" id="S20670">
    <property type="entry name" value="S20670"/>
</dbReference>
<dbReference type="SMR" id="P62778"/>
<dbReference type="GO" id="GO:0000786">
    <property type="term" value="C:nucleosome"/>
    <property type="evidence" value="ECO:0007669"/>
    <property type="project" value="UniProtKB-KW"/>
</dbReference>
<dbReference type="GO" id="GO:0005634">
    <property type="term" value="C:nucleus"/>
    <property type="evidence" value="ECO:0007669"/>
    <property type="project" value="UniProtKB-SubCell"/>
</dbReference>
<dbReference type="GO" id="GO:0003677">
    <property type="term" value="F:DNA binding"/>
    <property type="evidence" value="ECO:0007669"/>
    <property type="project" value="UniProtKB-KW"/>
</dbReference>
<dbReference type="GO" id="GO:0046982">
    <property type="term" value="F:protein heterodimerization activity"/>
    <property type="evidence" value="ECO:0007669"/>
    <property type="project" value="InterPro"/>
</dbReference>
<dbReference type="GO" id="GO:0030527">
    <property type="term" value="F:structural constituent of chromatin"/>
    <property type="evidence" value="ECO:0007669"/>
    <property type="project" value="InterPro"/>
</dbReference>
<dbReference type="CDD" id="cd22912">
    <property type="entry name" value="HFD_H4"/>
    <property type="match status" value="1"/>
</dbReference>
<dbReference type="FunFam" id="1.10.20.10:FF:000002">
    <property type="entry name" value="Histone H4"/>
    <property type="match status" value="1"/>
</dbReference>
<dbReference type="Gene3D" id="1.10.20.10">
    <property type="entry name" value="Histone, subunit A"/>
    <property type="match status" value="1"/>
</dbReference>
<dbReference type="InterPro" id="IPR035425">
    <property type="entry name" value="CENP-T/H4_C"/>
</dbReference>
<dbReference type="InterPro" id="IPR009072">
    <property type="entry name" value="Histone-fold"/>
</dbReference>
<dbReference type="InterPro" id="IPR001951">
    <property type="entry name" value="Histone_H4"/>
</dbReference>
<dbReference type="InterPro" id="IPR019809">
    <property type="entry name" value="Histone_H4_CS"/>
</dbReference>
<dbReference type="PANTHER" id="PTHR10484">
    <property type="entry name" value="HISTONE H4"/>
    <property type="match status" value="1"/>
</dbReference>
<dbReference type="Pfam" id="PF15511">
    <property type="entry name" value="CENP-T_C"/>
    <property type="match status" value="1"/>
</dbReference>
<dbReference type="PRINTS" id="PR00623">
    <property type="entry name" value="HISTONEH4"/>
</dbReference>
<dbReference type="SMART" id="SM00417">
    <property type="entry name" value="H4"/>
    <property type="match status" value="1"/>
</dbReference>
<dbReference type="SUPFAM" id="SSF47113">
    <property type="entry name" value="Histone-fold"/>
    <property type="match status" value="1"/>
</dbReference>
<dbReference type="PROSITE" id="PS00047">
    <property type="entry name" value="HISTONE_H4"/>
    <property type="match status" value="1"/>
</dbReference>
<proteinExistence type="inferred from homology"/>
<keyword id="KW-0007">Acetylation</keyword>
<keyword id="KW-0158">Chromosome</keyword>
<keyword id="KW-0238">DNA-binding</keyword>
<keyword id="KW-0488">Methylation</keyword>
<keyword id="KW-0544">Nucleosome core</keyword>
<keyword id="KW-0539">Nucleus</keyword>
<name>H4_PISOC</name>
<accession>P62778</accession>
<accession>P02306</accession>
<accession>P18678</accession>
<sequence length="103" mass="11369">MSGRGKGGKGLGKGGAKRHRKVLRDNIQGITKPAIRRLARRGGVKRISGLIYEETRGVLKVFLENVIRDAVTYCEHAKRKTVTAMDVVYALKRQGRTLYGFGG</sequence>
<comment type="function">
    <text>Core component of nucleosome. Nucleosomes wrap and compact DNA into chromatin, limiting DNA accessibility to the cellular machineries which require DNA as a template. Histones thereby play a central role in transcription regulation, DNA repair, DNA replication and chromosomal stability. DNA accessibility is regulated via a complex set of post-translational modifications of histones, also called histone code, and nucleosome remodeling.</text>
</comment>
<comment type="subunit">
    <text>The nucleosome is a histone octamer containing two molecules each of H2A, H2B, H3 and H4 assembled in one H3-H4 heterotetramer and two H2A-H2B heterodimers. The octamer wraps approximately 147 bp of DNA.</text>
</comment>
<comment type="subcellular location">
    <subcellularLocation>
        <location evidence="1">Nucleus</location>
    </subcellularLocation>
    <subcellularLocation>
        <location evidence="1">Chromosome</location>
    </subcellularLocation>
</comment>
<comment type="similarity">
    <text evidence="4">Belongs to the histone H4 family.</text>
</comment>